<gene>
    <name evidence="1" type="primary">minE</name>
    <name type="ordered locus">Pden_4711</name>
</gene>
<evidence type="ECO:0000255" key="1">
    <source>
        <dbReference type="HAMAP-Rule" id="MF_00262"/>
    </source>
</evidence>
<feature type="chain" id="PRO_0000298142" description="Cell division topological specificity factor">
    <location>
        <begin position="1"/>
        <end position="89"/>
    </location>
</feature>
<accession>A1BB78</accession>
<reference key="1">
    <citation type="submission" date="2006-12" db="EMBL/GenBank/DDBJ databases">
        <title>Complete sequence of plasmid 1 of Paracoccus denitrificans PD1222.</title>
        <authorList>
            <person name="Copeland A."/>
            <person name="Lucas S."/>
            <person name="Lapidus A."/>
            <person name="Barry K."/>
            <person name="Detter J.C."/>
            <person name="Glavina del Rio T."/>
            <person name="Hammon N."/>
            <person name="Israni S."/>
            <person name="Dalin E."/>
            <person name="Tice H."/>
            <person name="Pitluck S."/>
            <person name="Munk A.C."/>
            <person name="Brettin T."/>
            <person name="Bruce D."/>
            <person name="Han C."/>
            <person name="Tapia R."/>
            <person name="Gilna P."/>
            <person name="Schmutz J."/>
            <person name="Larimer F."/>
            <person name="Land M."/>
            <person name="Hauser L."/>
            <person name="Kyrpides N."/>
            <person name="Lykidis A."/>
            <person name="Spiro S."/>
            <person name="Richardson D.J."/>
            <person name="Moir J.W.B."/>
            <person name="Ferguson S.J."/>
            <person name="van Spanning R.J.M."/>
            <person name="Richardson P."/>
        </authorList>
    </citation>
    <scope>NUCLEOTIDE SEQUENCE [LARGE SCALE GENOMIC DNA]</scope>
    <source>
        <strain>Pd 1222</strain>
    </source>
</reference>
<name>MINE_PARDP</name>
<proteinExistence type="inferred from homology"/>
<keyword id="KW-0131">Cell cycle</keyword>
<keyword id="KW-0132">Cell division</keyword>
<keyword id="KW-0614">Plasmid</keyword>
<keyword id="KW-1185">Reference proteome</keyword>
<geneLocation type="plasmid">
    <name>pPD1222</name>
</geneLocation>
<dbReference type="EMBL" id="CP000491">
    <property type="protein sequence ID" value="ABL72772.1"/>
    <property type="molecule type" value="Genomic_DNA"/>
</dbReference>
<dbReference type="RefSeq" id="WP_011750931.1">
    <property type="nucleotide sequence ID" value="NC_008688.1"/>
</dbReference>
<dbReference type="SMR" id="A1BB78"/>
<dbReference type="EnsemblBacteria" id="ABL72772">
    <property type="protein sequence ID" value="ABL72772"/>
    <property type="gene ID" value="Pden_4711"/>
</dbReference>
<dbReference type="GeneID" id="93454734"/>
<dbReference type="KEGG" id="pde:Pden_4711"/>
<dbReference type="eggNOG" id="COG0851">
    <property type="taxonomic scope" value="Bacteria"/>
</dbReference>
<dbReference type="HOGENOM" id="CLU_137929_2_1_5"/>
<dbReference type="OrthoDB" id="9802655at2"/>
<dbReference type="Proteomes" id="UP000000361">
    <property type="component" value="Plasmid pPD1222"/>
</dbReference>
<dbReference type="GO" id="GO:0051301">
    <property type="term" value="P:cell division"/>
    <property type="evidence" value="ECO:0007669"/>
    <property type="project" value="UniProtKB-KW"/>
</dbReference>
<dbReference type="GO" id="GO:0032955">
    <property type="term" value="P:regulation of division septum assembly"/>
    <property type="evidence" value="ECO:0007669"/>
    <property type="project" value="InterPro"/>
</dbReference>
<dbReference type="FunFam" id="3.30.1070.10:FF:000001">
    <property type="entry name" value="Cell division topological specificity factor"/>
    <property type="match status" value="1"/>
</dbReference>
<dbReference type="Gene3D" id="3.30.1070.10">
    <property type="entry name" value="Cell division topological specificity factor MinE"/>
    <property type="match status" value="1"/>
</dbReference>
<dbReference type="HAMAP" id="MF_00262">
    <property type="entry name" value="MinE"/>
    <property type="match status" value="1"/>
</dbReference>
<dbReference type="InterPro" id="IPR005527">
    <property type="entry name" value="MinE"/>
</dbReference>
<dbReference type="InterPro" id="IPR036707">
    <property type="entry name" value="MinE_sf"/>
</dbReference>
<dbReference type="NCBIfam" id="TIGR01215">
    <property type="entry name" value="minE"/>
    <property type="match status" value="1"/>
</dbReference>
<dbReference type="NCBIfam" id="NF001422">
    <property type="entry name" value="PRK00296.1"/>
    <property type="match status" value="1"/>
</dbReference>
<dbReference type="Pfam" id="PF03776">
    <property type="entry name" value="MinE"/>
    <property type="match status" value="1"/>
</dbReference>
<dbReference type="SUPFAM" id="SSF55229">
    <property type="entry name" value="Cell division protein MinE topological specificity domain"/>
    <property type="match status" value="1"/>
</dbReference>
<comment type="function">
    <text evidence="1">Prevents the cell division inhibition by proteins MinC and MinD at internal division sites while permitting inhibition at polar sites. This ensures cell division at the proper site by restricting the formation of a division septum at the midpoint of the long axis of the cell.</text>
</comment>
<comment type="similarity">
    <text evidence="1">Belongs to the MinE family.</text>
</comment>
<protein>
    <recommendedName>
        <fullName evidence="1">Cell division topological specificity factor</fullName>
    </recommendedName>
</protein>
<organism>
    <name type="scientific">Paracoccus denitrificans (strain Pd 1222)</name>
    <dbReference type="NCBI Taxonomy" id="318586"/>
    <lineage>
        <taxon>Bacteria</taxon>
        <taxon>Pseudomonadati</taxon>
        <taxon>Pseudomonadota</taxon>
        <taxon>Alphaproteobacteria</taxon>
        <taxon>Rhodobacterales</taxon>
        <taxon>Paracoccaceae</taxon>
        <taxon>Paracoccus</taxon>
    </lineage>
</organism>
<sequence length="89" mass="10210">MFGFSFRQRKPSSAQTAKERLQILLAHERSSGGSNPDFLPLLQRDILEVVRRHMEIDSDAVDVKLERSDDLSSLEINIELPYAKQLKRA</sequence>